<proteinExistence type="evidence at transcript level"/>
<feature type="chain" id="PRO_0000050446" description="Sugar carrier protein A">
    <location>
        <begin position="1"/>
        <end position="522"/>
    </location>
</feature>
<feature type="topological domain" description="Cytoplasmic" evidence="1">
    <location>
        <begin position="1"/>
        <end position="22"/>
    </location>
</feature>
<feature type="transmembrane region" description="Helical; Name=1" evidence="1">
    <location>
        <begin position="23"/>
        <end position="43"/>
    </location>
</feature>
<feature type="transmembrane region" description="Helical; Name=2" evidence="1">
    <location>
        <begin position="87"/>
        <end position="107"/>
    </location>
</feature>
<feature type="transmembrane region" description="Helical; Name=3" evidence="1">
    <location>
        <begin position="121"/>
        <end position="141"/>
    </location>
</feature>
<feature type="transmembrane region" description="Helical; Name=4" evidence="1">
    <location>
        <begin position="144"/>
        <end position="164"/>
    </location>
</feature>
<feature type="transmembrane region" description="Helical; Name=5" evidence="1">
    <location>
        <begin position="173"/>
        <end position="193"/>
    </location>
</feature>
<feature type="transmembrane region" description="Helical; Name=6" evidence="1">
    <location>
        <begin position="205"/>
        <end position="225"/>
    </location>
</feature>
<feature type="transmembrane region" description="Helical; Name=7" evidence="1">
    <location>
        <begin position="286"/>
        <end position="306"/>
    </location>
</feature>
<feature type="transmembrane region" description="Helical; Name=8" evidence="1">
    <location>
        <begin position="322"/>
        <end position="342"/>
    </location>
</feature>
<feature type="transmembrane region" description="Helical; Name=9" evidence="1">
    <location>
        <begin position="351"/>
        <end position="371"/>
    </location>
</feature>
<feature type="transmembrane region" description="Helical; Name=10" evidence="1">
    <location>
        <begin position="384"/>
        <end position="404"/>
    </location>
</feature>
<feature type="transmembrane region" description="Helical; Name=11" evidence="1">
    <location>
        <begin position="430"/>
        <end position="450"/>
    </location>
</feature>
<feature type="transmembrane region" description="Helical; Name=12" evidence="1">
    <location>
        <begin position="453"/>
        <end position="473"/>
    </location>
</feature>
<feature type="topological domain" description="Cytoplasmic" evidence="1">
    <location>
        <begin position="474"/>
        <end position="522"/>
    </location>
</feature>
<gene>
    <name type="primary">STA</name>
</gene>
<protein>
    <recommendedName>
        <fullName>Sugar carrier protein A</fullName>
    </recommendedName>
</protein>
<name>STA_RICCO</name>
<dbReference type="EMBL" id="L08197">
    <property type="protein sequence ID" value="AAA79769.1"/>
    <property type="molecule type" value="mRNA"/>
</dbReference>
<dbReference type="PIR" id="T10150">
    <property type="entry name" value="T10150"/>
</dbReference>
<dbReference type="RefSeq" id="NP_001310635.1">
    <property type="nucleotide sequence ID" value="NM_001323706.1"/>
</dbReference>
<dbReference type="SMR" id="Q10710"/>
<dbReference type="GeneID" id="8262851"/>
<dbReference type="KEGG" id="rcu:8262851"/>
<dbReference type="eggNOG" id="KOG0254">
    <property type="taxonomic scope" value="Eukaryota"/>
</dbReference>
<dbReference type="OMA" id="FMQTFAP"/>
<dbReference type="OrthoDB" id="5296287at2759"/>
<dbReference type="GO" id="GO:0016020">
    <property type="term" value="C:membrane"/>
    <property type="evidence" value="ECO:0007669"/>
    <property type="project" value="UniProtKB-SubCell"/>
</dbReference>
<dbReference type="GO" id="GO:0015145">
    <property type="term" value="F:monosaccharide transmembrane transporter activity"/>
    <property type="evidence" value="ECO:0007669"/>
    <property type="project" value="InterPro"/>
</dbReference>
<dbReference type="GO" id="GO:0015293">
    <property type="term" value="F:symporter activity"/>
    <property type="evidence" value="ECO:0007669"/>
    <property type="project" value="UniProtKB-KW"/>
</dbReference>
<dbReference type="CDD" id="cd17361">
    <property type="entry name" value="MFS_STP"/>
    <property type="match status" value="1"/>
</dbReference>
<dbReference type="FunFam" id="1.20.1250.20:FF:000002">
    <property type="entry name" value="Sugar transport protein 13"/>
    <property type="match status" value="1"/>
</dbReference>
<dbReference type="Gene3D" id="1.20.1250.20">
    <property type="entry name" value="MFS general substrate transporter like domains"/>
    <property type="match status" value="1"/>
</dbReference>
<dbReference type="InterPro" id="IPR020846">
    <property type="entry name" value="MFS_dom"/>
</dbReference>
<dbReference type="InterPro" id="IPR044778">
    <property type="entry name" value="MFS_STP/MST-like_plant"/>
</dbReference>
<dbReference type="InterPro" id="IPR005828">
    <property type="entry name" value="MFS_sugar_transport-like"/>
</dbReference>
<dbReference type="InterPro" id="IPR036259">
    <property type="entry name" value="MFS_trans_sf"/>
</dbReference>
<dbReference type="InterPro" id="IPR045262">
    <property type="entry name" value="STP/PLT_plant"/>
</dbReference>
<dbReference type="InterPro" id="IPR003663">
    <property type="entry name" value="Sugar/inositol_transpt"/>
</dbReference>
<dbReference type="InterPro" id="IPR005829">
    <property type="entry name" value="Sugar_transporter_CS"/>
</dbReference>
<dbReference type="NCBIfam" id="TIGR00879">
    <property type="entry name" value="SP"/>
    <property type="match status" value="1"/>
</dbReference>
<dbReference type="PANTHER" id="PTHR23500">
    <property type="entry name" value="SOLUTE CARRIER FAMILY 2, FACILITATED GLUCOSE TRANSPORTER"/>
    <property type="match status" value="1"/>
</dbReference>
<dbReference type="PANTHER" id="PTHR23500:SF109">
    <property type="entry name" value="SUGAR TRANSPORT PROTEIN 7"/>
    <property type="match status" value="1"/>
</dbReference>
<dbReference type="Pfam" id="PF00083">
    <property type="entry name" value="Sugar_tr"/>
    <property type="match status" value="1"/>
</dbReference>
<dbReference type="PRINTS" id="PR00171">
    <property type="entry name" value="SUGRTRNSPORT"/>
</dbReference>
<dbReference type="SUPFAM" id="SSF103473">
    <property type="entry name" value="MFS general substrate transporter"/>
    <property type="match status" value="1"/>
</dbReference>
<dbReference type="PROSITE" id="PS50850">
    <property type="entry name" value="MFS"/>
    <property type="match status" value="1"/>
</dbReference>
<dbReference type="PROSITE" id="PS00216">
    <property type="entry name" value="SUGAR_TRANSPORT_1"/>
    <property type="match status" value="1"/>
</dbReference>
<dbReference type="PROSITE" id="PS00217">
    <property type="entry name" value="SUGAR_TRANSPORT_2"/>
    <property type="match status" value="1"/>
</dbReference>
<keyword id="KW-0472">Membrane</keyword>
<keyword id="KW-0762">Sugar transport</keyword>
<keyword id="KW-0769">Symport</keyword>
<keyword id="KW-0812">Transmembrane</keyword>
<keyword id="KW-1133">Transmembrane helix</keyword>
<keyword id="KW-0813">Transport</keyword>
<comment type="subcellular location">
    <subcellularLocation>
        <location evidence="2">Membrane</location>
        <topology evidence="2">Multi-pass membrane protein</topology>
    </subcellularLocation>
</comment>
<comment type="similarity">
    <text evidence="2">Belongs to the major facilitator superfamily. Sugar transporter (TC 2.A.1.1) family.</text>
</comment>
<reference key="1">
    <citation type="journal article" date="1994" name="J. Plant Physiol.">
        <title>Isolation of a family of cDNA-clones from Ricinus communis L. with close homology to the hexose carriers.</title>
        <authorList>
            <person name="Weig A."/>
            <person name="Franz J."/>
            <person name="Sauer N."/>
            <person name="Komor E."/>
        </authorList>
    </citation>
    <scope>NUCLEOTIDE SEQUENCE [MRNA]</scope>
    <source>
        <strain>cv. Carmencita</strain>
        <tissue>Cotyledon</tissue>
    </source>
</reference>
<evidence type="ECO:0000255" key="1"/>
<evidence type="ECO:0000305" key="2"/>
<accession>Q10710</accession>
<sequence length="522" mass="56874">MAGGSLAPAGVAKERAEQYQGKVTFAVFVACMVAAVGGSIFGYDIGISGGVISMDAFLEKFFRSVYLKKKHAHENNYCKYDDQRLAAFTSSLYLAGLAASLVAGPITRIYGRRASIISGGISFLIGAALNATAINLAMLLLGRIMLGVGIGFGNQAVPLYLSEMAPTHLRGGLNIMFQLATTSGIFTANMVNYGTHKLESWGWRLSLGLAAAPALLMTIGGLLLPETPNSLIEQGLHEKGRNVLEKIRGTKHVDAEFQDMLDASELANSIKHPFRNILEKRNRPQLVMAIFMPTFQILTGINIILFYAPPLFQSMGFGGNAALYSSAVTGAVLCSSTFISIATVDRLGRRFLLISGGIQMITCQVIVAIILGVKFGDNQQLSKSFSVLVVIMICLFVLAFGWSWGPLGWTVPSEIFPLETRSAGQSITVAVNLFFTFVIAQSFPSLLCAFKFGIFLFFAGWVTVMTAFVYIFLPETKGVPIEEMIFLWRKHWFWKKIVPGQPEVDDSRESMEMGEAVASRIK</sequence>
<organism>
    <name type="scientific">Ricinus communis</name>
    <name type="common">Castor bean</name>
    <dbReference type="NCBI Taxonomy" id="3988"/>
    <lineage>
        <taxon>Eukaryota</taxon>
        <taxon>Viridiplantae</taxon>
        <taxon>Streptophyta</taxon>
        <taxon>Embryophyta</taxon>
        <taxon>Tracheophyta</taxon>
        <taxon>Spermatophyta</taxon>
        <taxon>Magnoliopsida</taxon>
        <taxon>eudicotyledons</taxon>
        <taxon>Gunneridae</taxon>
        <taxon>Pentapetalae</taxon>
        <taxon>rosids</taxon>
        <taxon>fabids</taxon>
        <taxon>Malpighiales</taxon>
        <taxon>Euphorbiaceae</taxon>
        <taxon>Acalyphoideae</taxon>
        <taxon>Acalypheae</taxon>
        <taxon>Ricinus</taxon>
    </lineage>
</organism>